<evidence type="ECO:0000255" key="1">
    <source>
        <dbReference type="HAMAP-Rule" id="MF_01113"/>
    </source>
</evidence>
<sequence length="358" mass="39588">MRKIIHIDMDCYFAAVEMRDFPEYRGKPLAVGGSSDRRGVISTCSYEARKFGVRSAMATAYAFKLCPDLILVPGRMQVYKDVSLQIREIFSRYTQLVEPLSLDEAYLDVSECQQYKGSATLIAQAIRRDILAETGLTASAGIAPVKFLAKVASDLNKPNGQYVITPETLPEFVKTLSLRKIPGVGKVTAEKLSSLGLNTCGDVQAYSKPELLARFGKFGGVLIERSQGIDERGISADRERKSVGVETTLAKDIYSLEQCQQVMPGLIQELALRLSRSAKERKIHKQVVKLKFNDFKQTTIEHRSDEVSIVMFYDLLAQAMARQEGRGIRLLGISVGLADSILAVSEIPNAQTQLDLAL</sequence>
<feature type="chain" id="PRO_1000084926" description="DNA polymerase IV">
    <location>
        <begin position="1"/>
        <end position="358"/>
    </location>
</feature>
<feature type="domain" description="UmuC" evidence="1">
    <location>
        <begin position="4"/>
        <end position="185"/>
    </location>
</feature>
<feature type="active site" evidence="1">
    <location>
        <position position="104"/>
    </location>
</feature>
<feature type="binding site" evidence="1">
    <location>
        <position position="8"/>
    </location>
    <ligand>
        <name>Mg(2+)</name>
        <dbReference type="ChEBI" id="CHEBI:18420"/>
    </ligand>
</feature>
<feature type="binding site" evidence="1">
    <location>
        <position position="103"/>
    </location>
    <ligand>
        <name>Mg(2+)</name>
        <dbReference type="ChEBI" id="CHEBI:18420"/>
    </ligand>
</feature>
<feature type="site" description="Substrate discrimination" evidence="1">
    <location>
        <position position="13"/>
    </location>
</feature>
<proteinExistence type="inferred from homology"/>
<comment type="function">
    <text evidence="1">Poorly processive, error-prone DNA polymerase involved in untargeted mutagenesis. Copies undamaged DNA at stalled replication forks, which arise in vivo from mismatched or misaligned primer ends. These misaligned primers can be extended by PolIV. Exhibits no 3'-5' exonuclease (proofreading) activity. May be involved in translesional synthesis, in conjunction with the beta clamp from PolIII.</text>
</comment>
<comment type="catalytic activity">
    <reaction evidence="1">
        <text>DNA(n) + a 2'-deoxyribonucleoside 5'-triphosphate = DNA(n+1) + diphosphate</text>
        <dbReference type="Rhea" id="RHEA:22508"/>
        <dbReference type="Rhea" id="RHEA-COMP:17339"/>
        <dbReference type="Rhea" id="RHEA-COMP:17340"/>
        <dbReference type="ChEBI" id="CHEBI:33019"/>
        <dbReference type="ChEBI" id="CHEBI:61560"/>
        <dbReference type="ChEBI" id="CHEBI:173112"/>
        <dbReference type="EC" id="2.7.7.7"/>
    </reaction>
</comment>
<comment type="cofactor">
    <cofactor evidence="1">
        <name>Mg(2+)</name>
        <dbReference type="ChEBI" id="CHEBI:18420"/>
    </cofactor>
    <text evidence="1">Binds 2 magnesium ions per subunit.</text>
</comment>
<comment type="subunit">
    <text evidence="1">Monomer.</text>
</comment>
<comment type="subcellular location">
    <subcellularLocation>
        <location evidence="1">Cytoplasm</location>
    </subcellularLocation>
</comment>
<comment type="similarity">
    <text evidence="1">Belongs to the DNA polymerase type-Y family.</text>
</comment>
<organism>
    <name type="scientific">Shewanella baltica (strain OS155 / ATCC BAA-1091)</name>
    <dbReference type="NCBI Taxonomy" id="325240"/>
    <lineage>
        <taxon>Bacteria</taxon>
        <taxon>Pseudomonadati</taxon>
        <taxon>Pseudomonadota</taxon>
        <taxon>Gammaproteobacteria</taxon>
        <taxon>Alteromonadales</taxon>
        <taxon>Shewanellaceae</taxon>
        <taxon>Shewanella</taxon>
    </lineage>
</organism>
<protein>
    <recommendedName>
        <fullName evidence="1">DNA polymerase IV</fullName>
        <shortName evidence="1">Pol IV</shortName>
        <ecNumber evidence="1">2.7.7.7</ecNumber>
    </recommendedName>
</protein>
<accession>A3D147</accession>
<name>DPO4_SHEB5</name>
<keyword id="KW-0963">Cytoplasm</keyword>
<keyword id="KW-0227">DNA damage</keyword>
<keyword id="KW-0234">DNA repair</keyword>
<keyword id="KW-0235">DNA replication</keyword>
<keyword id="KW-0238">DNA-binding</keyword>
<keyword id="KW-0239">DNA-directed DNA polymerase</keyword>
<keyword id="KW-0460">Magnesium</keyword>
<keyword id="KW-0479">Metal-binding</keyword>
<keyword id="KW-0515">Mutator protein</keyword>
<keyword id="KW-0548">Nucleotidyltransferase</keyword>
<keyword id="KW-1185">Reference proteome</keyword>
<keyword id="KW-0808">Transferase</keyword>
<dbReference type="EC" id="2.7.7.7" evidence="1"/>
<dbReference type="EMBL" id="CP000563">
    <property type="protein sequence ID" value="ABN60460.1"/>
    <property type="molecule type" value="Genomic_DNA"/>
</dbReference>
<dbReference type="RefSeq" id="WP_006080479.1">
    <property type="nucleotide sequence ID" value="NC_009052.1"/>
</dbReference>
<dbReference type="SMR" id="A3D147"/>
<dbReference type="STRING" id="325240.Sbal_0935"/>
<dbReference type="KEGG" id="sbl:Sbal_0935"/>
<dbReference type="HOGENOM" id="CLU_012348_1_2_6"/>
<dbReference type="OrthoDB" id="9808813at2"/>
<dbReference type="Proteomes" id="UP000001557">
    <property type="component" value="Chromosome"/>
</dbReference>
<dbReference type="GO" id="GO:0005829">
    <property type="term" value="C:cytosol"/>
    <property type="evidence" value="ECO:0007669"/>
    <property type="project" value="TreeGrafter"/>
</dbReference>
<dbReference type="GO" id="GO:0003684">
    <property type="term" value="F:damaged DNA binding"/>
    <property type="evidence" value="ECO:0007669"/>
    <property type="project" value="InterPro"/>
</dbReference>
<dbReference type="GO" id="GO:0003887">
    <property type="term" value="F:DNA-directed DNA polymerase activity"/>
    <property type="evidence" value="ECO:0007669"/>
    <property type="project" value="UniProtKB-UniRule"/>
</dbReference>
<dbReference type="GO" id="GO:0000287">
    <property type="term" value="F:magnesium ion binding"/>
    <property type="evidence" value="ECO:0007669"/>
    <property type="project" value="UniProtKB-UniRule"/>
</dbReference>
<dbReference type="GO" id="GO:0006261">
    <property type="term" value="P:DNA-templated DNA replication"/>
    <property type="evidence" value="ECO:0007669"/>
    <property type="project" value="UniProtKB-UniRule"/>
</dbReference>
<dbReference type="GO" id="GO:0042276">
    <property type="term" value="P:error-prone translesion synthesis"/>
    <property type="evidence" value="ECO:0007669"/>
    <property type="project" value="TreeGrafter"/>
</dbReference>
<dbReference type="GO" id="GO:0009432">
    <property type="term" value="P:SOS response"/>
    <property type="evidence" value="ECO:0007669"/>
    <property type="project" value="TreeGrafter"/>
</dbReference>
<dbReference type="CDD" id="cd03586">
    <property type="entry name" value="PolY_Pol_IV_kappa"/>
    <property type="match status" value="1"/>
</dbReference>
<dbReference type="FunFam" id="1.10.150.20:FF:000019">
    <property type="entry name" value="DNA polymerase IV"/>
    <property type="match status" value="1"/>
</dbReference>
<dbReference type="FunFam" id="3.30.70.270:FF:000002">
    <property type="entry name" value="DNA polymerase IV"/>
    <property type="match status" value="1"/>
</dbReference>
<dbReference type="FunFam" id="3.40.1170.60:FF:000001">
    <property type="entry name" value="DNA polymerase IV"/>
    <property type="match status" value="1"/>
</dbReference>
<dbReference type="Gene3D" id="3.30.70.270">
    <property type="match status" value="1"/>
</dbReference>
<dbReference type="Gene3D" id="3.40.1170.60">
    <property type="match status" value="1"/>
</dbReference>
<dbReference type="Gene3D" id="1.10.150.20">
    <property type="entry name" value="5' to 3' exonuclease, C-terminal subdomain"/>
    <property type="match status" value="1"/>
</dbReference>
<dbReference type="Gene3D" id="3.30.1490.100">
    <property type="entry name" value="DNA polymerase, Y-family, little finger domain"/>
    <property type="match status" value="1"/>
</dbReference>
<dbReference type="HAMAP" id="MF_01113">
    <property type="entry name" value="DNApol_IV"/>
    <property type="match status" value="1"/>
</dbReference>
<dbReference type="InterPro" id="IPR043502">
    <property type="entry name" value="DNA/RNA_pol_sf"/>
</dbReference>
<dbReference type="InterPro" id="IPR036775">
    <property type="entry name" value="DNA_pol_Y-fam_lit_finger_sf"/>
</dbReference>
<dbReference type="InterPro" id="IPR017961">
    <property type="entry name" value="DNA_pol_Y-fam_little_finger"/>
</dbReference>
<dbReference type="InterPro" id="IPR050116">
    <property type="entry name" value="DNA_polymerase-Y"/>
</dbReference>
<dbReference type="InterPro" id="IPR022880">
    <property type="entry name" value="DNApol_IV"/>
</dbReference>
<dbReference type="InterPro" id="IPR053848">
    <property type="entry name" value="IMS_HHH_1"/>
</dbReference>
<dbReference type="InterPro" id="IPR043128">
    <property type="entry name" value="Rev_trsase/Diguanyl_cyclase"/>
</dbReference>
<dbReference type="InterPro" id="IPR001126">
    <property type="entry name" value="UmuC"/>
</dbReference>
<dbReference type="NCBIfam" id="NF002677">
    <property type="entry name" value="PRK02406.1"/>
    <property type="match status" value="1"/>
</dbReference>
<dbReference type="PANTHER" id="PTHR11076:SF33">
    <property type="entry name" value="DNA POLYMERASE KAPPA"/>
    <property type="match status" value="1"/>
</dbReference>
<dbReference type="PANTHER" id="PTHR11076">
    <property type="entry name" value="DNA REPAIR POLYMERASE UMUC / TRANSFERASE FAMILY MEMBER"/>
    <property type="match status" value="1"/>
</dbReference>
<dbReference type="Pfam" id="PF00817">
    <property type="entry name" value="IMS"/>
    <property type="match status" value="1"/>
</dbReference>
<dbReference type="Pfam" id="PF11799">
    <property type="entry name" value="IMS_C"/>
    <property type="match status" value="1"/>
</dbReference>
<dbReference type="Pfam" id="PF21999">
    <property type="entry name" value="IMS_HHH_1"/>
    <property type="match status" value="1"/>
</dbReference>
<dbReference type="SUPFAM" id="SSF56672">
    <property type="entry name" value="DNA/RNA polymerases"/>
    <property type="match status" value="1"/>
</dbReference>
<dbReference type="SUPFAM" id="SSF100879">
    <property type="entry name" value="Lesion bypass DNA polymerase (Y-family), little finger domain"/>
    <property type="match status" value="1"/>
</dbReference>
<dbReference type="PROSITE" id="PS50173">
    <property type="entry name" value="UMUC"/>
    <property type="match status" value="1"/>
</dbReference>
<reference key="1">
    <citation type="submission" date="2007-02" db="EMBL/GenBank/DDBJ databases">
        <title>Complete sequence of chromosome of Shewanella baltica OS155.</title>
        <authorList>
            <consortium name="US DOE Joint Genome Institute"/>
            <person name="Copeland A."/>
            <person name="Lucas S."/>
            <person name="Lapidus A."/>
            <person name="Barry K."/>
            <person name="Detter J.C."/>
            <person name="Glavina del Rio T."/>
            <person name="Hammon N."/>
            <person name="Israni S."/>
            <person name="Dalin E."/>
            <person name="Tice H."/>
            <person name="Pitluck S."/>
            <person name="Sims D.R."/>
            <person name="Brettin T."/>
            <person name="Bruce D."/>
            <person name="Han C."/>
            <person name="Tapia R."/>
            <person name="Brainard J."/>
            <person name="Schmutz J."/>
            <person name="Larimer F."/>
            <person name="Land M."/>
            <person name="Hauser L."/>
            <person name="Kyrpides N."/>
            <person name="Mikhailova N."/>
            <person name="Brettar I."/>
            <person name="Klappenbach J."/>
            <person name="Konstantinidis K."/>
            <person name="Rodrigues J."/>
            <person name="Tiedje J."/>
            <person name="Richardson P."/>
        </authorList>
    </citation>
    <scope>NUCLEOTIDE SEQUENCE [LARGE SCALE GENOMIC DNA]</scope>
    <source>
        <strain>OS155 / ATCC BAA-1091</strain>
    </source>
</reference>
<gene>
    <name evidence="1" type="primary">dinB</name>
    <name type="ordered locus">Sbal_0935</name>
</gene>